<protein>
    <recommendedName>
        <fullName evidence="2">N(4)-acetylcytidine amidohydrolase</fullName>
        <shortName evidence="2">ac4C amidohydrolase</shortName>
        <ecNumber evidence="2">3.5.1.135</ecNumber>
    </recommendedName>
</protein>
<proteinExistence type="inferred from homology"/>
<accession>A3D5K4</accession>
<organism>
    <name type="scientific">Shewanella baltica (strain OS155 / ATCC BAA-1091)</name>
    <dbReference type="NCBI Taxonomy" id="325240"/>
    <lineage>
        <taxon>Bacteria</taxon>
        <taxon>Pseudomonadati</taxon>
        <taxon>Pseudomonadota</taxon>
        <taxon>Gammaproteobacteria</taxon>
        <taxon>Alteromonadales</taxon>
        <taxon>Shewanellaceae</taxon>
        <taxon>Shewanella</taxon>
    </lineage>
</organism>
<feature type="chain" id="PRO_1000044953" description="N(4)-acetylcytidine amidohydrolase">
    <location>
        <begin position="1"/>
        <end position="105"/>
    </location>
</feature>
<feature type="domain" description="ASCH" evidence="1">
    <location>
        <begin position="7"/>
        <end position="93"/>
    </location>
</feature>
<feature type="active site" description="Proton acceptor" evidence="2">
    <location>
        <position position="21"/>
    </location>
</feature>
<feature type="active site" description="Nucleophile" evidence="2">
    <location>
        <position position="24"/>
    </location>
</feature>
<feature type="active site" description="Proton donor" evidence="2">
    <location>
        <position position="74"/>
    </location>
</feature>
<name>AC4CH_SHEB5</name>
<reference key="1">
    <citation type="submission" date="2007-02" db="EMBL/GenBank/DDBJ databases">
        <title>Complete sequence of chromosome of Shewanella baltica OS155.</title>
        <authorList>
            <consortium name="US DOE Joint Genome Institute"/>
            <person name="Copeland A."/>
            <person name="Lucas S."/>
            <person name="Lapidus A."/>
            <person name="Barry K."/>
            <person name="Detter J.C."/>
            <person name="Glavina del Rio T."/>
            <person name="Hammon N."/>
            <person name="Israni S."/>
            <person name="Dalin E."/>
            <person name="Tice H."/>
            <person name="Pitluck S."/>
            <person name="Sims D.R."/>
            <person name="Brettin T."/>
            <person name="Bruce D."/>
            <person name="Han C."/>
            <person name="Tapia R."/>
            <person name="Brainard J."/>
            <person name="Schmutz J."/>
            <person name="Larimer F."/>
            <person name="Land M."/>
            <person name="Hauser L."/>
            <person name="Kyrpides N."/>
            <person name="Mikhailova N."/>
            <person name="Brettar I."/>
            <person name="Klappenbach J."/>
            <person name="Konstantinidis K."/>
            <person name="Rodrigues J."/>
            <person name="Tiedje J."/>
            <person name="Richardson P."/>
        </authorList>
    </citation>
    <scope>NUCLEOTIDE SEQUENCE [LARGE SCALE GENOMIC DNA]</scope>
    <source>
        <strain>OS155 / ATCC BAA-1091</strain>
    </source>
</reference>
<gene>
    <name type="ordered locus">Sbal_2524</name>
</gene>
<comment type="function">
    <text evidence="2">Catalyzes the hydrolysis of N(4)-acetylcytidine (ac4C).</text>
</comment>
<comment type="catalytic activity">
    <reaction evidence="2">
        <text>N(4)-acetylcytidine + H2O = cytidine + acetate + H(+)</text>
        <dbReference type="Rhea" id="RHEA:62932"/>
        <dbReference type="ChEBI" id="CHEBI:15377"/>
        <dbReference type="ChEBI" id="CHEBI:15378"/>
        <dbReference type="ChEBI" id="CHEBI:17562"/>
        <dbReference type="ChEBI" id="CHEBI:30089"/>
        <dbReference type="ChEBI" id="CHEBI:70989"/>
        <dbReference type="EC" id="3.5.1.135"/>
    </reaction>
</comment>
<comment type="catalytic activity">
    <reaction evidence="2">
        <text>N(4)-acetyl-2'-deoxycytidine + H2O = 2'-deoxycytidine + acetate + H(+)</text>
        <dbReference type="Rhea" id="RHEA:62936"/>
        <dbReference type="ChEBI" id="CHEBI:15377"/>
        <dbReference type="ChEBI" id="CHEBI:15378"/>
        <dbReference type="ChEBI" id="CHEBI:15698"/>
        <dbReference type="ChEBI" id="CHEBI:30089"/>
        <dbReference type="ChEBI" id="CHEBI:146133"/>
        <dbReference type="EC" id="3.5.1.135"/>
    </reaction>
</comment>
<comment type="catalytic activity">
    <reaction evidence="2">
        <text>N(4)-acetylcytosine + H2O = cytosine + acetate + H(+)</text>
        <dbReference type="Rhea" id="RHEA:62940"/>
        <dbReference type="ChEBI" id="CHEBI:15377"/>
        <dbReference type="ChEBI" id="CHEBI:15378"/>
        <dbReference type="ChEBI" id="CHEBI:16040"/>
        <dbReference type="ChEBI" id="CHEBI:30089"/>
        <dbReference type="ChEBI" id="CHEBI:146134"/>
        <dbReference type="EC" id="3.5.1.135"/>
    </reaction>
</comment>
<comment type="similarity">
    <text evidence="2">Belongs to the N(4)-acetylcytidine amidohydrolase family.</text>
</comment>
<evidence type="ECO:0000255" key="1"/>
<evidence type="ECO:0000255" key="2">
    <source>
        <dbReference type="HAMAP-Rule" id="MF_00684"/>
    </source>
</evidence>
<dbReference type="EC" id="3.5.1.135" evidence="2"/>
<dbReference type="EMBL" id="CP000563">
    <property type="protein sequence ID" value="ABN62017.1"/>
    <property type="molecule type" value="Genomic_DNA"/>
</dbReference>
<dbReference type="RefSeq" id="WP_011847028.1">
    <property type="nucleotide sequence ID" value="NC_009052.1"/>
</dbReference>
<dbReference type="SMR" id="A3D5K4"/>
<dbReference type="STRING" id="325240.Sbal_2524"/>
<dbReference type="KEGG" id="sbl:Sbal_2524"/>
<dbReference type="HOGENOM" id="CLU_152586_0_0_6"/>
<dbReference type="OrthoDB" id="8590202at2"/>
<dbReference type="Proteomes" id="UP000001557">
    <property type="component" value="Chromosome"/>
</dbReference>
<dbReference type="GO" id="GO:0005829">
    <property type="term" value="C:cytosol"/>
    <property type="evidence" value="ECO:0007669"/>
    <property type="project" value="TreeGrafter"/>
</dbReference>
<dbReference type="GO" id="GO:0016813">
    <property type="term" value="F:hydrolase activity, acting on carbon-nitrogen (but not peptide) bonds, in linear amidines"/>
    <property type="evidence" value="ECO:0007669"/>
    <property type="project" value="UniProtKB-UniRule"/>
</dbReference>
<dbReference type="GO" id="GO:0106251">
    <property type="term" value="F:N4-acetylcytidine amidohydrolase activity"/>
    <property type="evidence" value="ECO:0007669"/>
    <property type="project" value="RHEA"/>
</dbReference>
<dbReference type="CDD" id="cd06552">
    <property type="entry name" value="ASCH_yqfb_like"/>
    <property type="match status" value="1"/>
</dbReference>
<dbReference type="Gene3D" id="2.30.130.30">
    <property type="entry name" value="Hypothetical protein"/>
    <property type="match status" value="1"/>
</dbReference>
<dbReference type="HAMAP" id="MF_00684">
    <property type="entry name" value="ac4C_amidohydr"/>
    <property type="match status" value="1"/>
</dbReference>
<dbReference type="InterPro" id="IPR008314">
    <property type="entry name" value="AC4CH"/>
</dbReference>
<dbReference type="InterPro" id="IPR007374">
    <property type="entry name" value="ASCH_domain"/>
</dbReference>
<dbReference type="InterPro" id="IPR015947">
    <property type="entry name" value="PUA-like_sf"/>
</dbReference>
<dbReference type="NCBIfam" id="NF003443">
    <property type="entry name" value="PRK04980.1"/>
    <property type="match status" value="1"/>
</dbReference>
<dbReference type="PANTHER" id="PTHR38088">
    <property type="entry name" value="UCP029143 FAMILY PROTEIN"/>
    <property type="match status" value="1"/>
</dbReference>
<dbReference type="PANTHER" id="PTHR38088:SF2">
    <property type="entry name" value="UCP029143 FAMILY PROTEIN"/>
    <property type="match status" value="1"/>
</dbReference>
<dbReference type="Pfam" id="PF04266">
    <property type="entry name" value="ASCH"/>
    <property type="match status" value="1"/>
</dbReference>
<dbReference type="PIRSF" id="PIRSF029143">
    <property type="entry name" value="UCP029143"/>
    <property type="match status" value="1"/>
</dbReference>
<dbReference type="SMART" id="SM01022">
    <property type="entry name" value="ASCH"/>
    <property type="match status" value="1"/>
</dbReference>
<dbReference type="SUPFAM" id="SSF88697">
    <property type="entry name" value="PUA domain-like"/>
    <property type="match status" value="1"/>
</dbReference>
<keyword id="KW-0378">Hydrolase</keyword>
<keyword id="KW-1185">Reference proteome</keyword>
<sequence length="105" mass="12306">MLLNKITFFERFEHDILSGAKTITLRDEAESHVITGQILPVSTFETDRWFCDIQIIDVTPVKLTELTEMHAKQENMTLPQLRDVIAEIYPGLEQLFMIRFRILLQ</sequence>